<organism>
    <name type="scientific">Bacillus subtilis (strain 168)</name>
    <dbReference type="NCBI Taxonomy" id="224308"/>
    <lineage>
        <taxon>Bacteria</taxon>
        <taxon>Bacillati</taxon>
        <taxon>Bacillota</taxon>
        <taxon>Bacilli</taxon>
        <taxon>Bacillales</taxon>
        <taxon>Bacillaceae</taxon>
        <taxon>Bacillus</taxon>
    </lineage>
</organism>
<proteinExistence type="evidence at protein level"/>
<accession>P37522</accession>
<dbReference type="EC" id="3.6.4.-" evidence="1"/>
<dbReference type="EMBL" id="X62539">
    <property type="protein sequence ID" value="CAA44408.1"/>
    <property type="molecule type" value="Genomic_DNA"/>
</dbReference>
<dbReference type="EMBL" id="D26185">
    <property type="protein sequence ID" value="BAA05227.1"/>
    <property type="molecule type" value="Genomic_DNA"/>
</dbReference>
<dbReference type="EMBL" id="AL009126">
    <property type="protein sequence ID" value="CAB16134.1"/>
    <property type="molecule type" value="Genomic_DNA"/>
</dbReference>
<dbReference type="PIR" id="I40444">
    <property type="entry name" value="I40444"/>
</dbReference>
<dbReference type="RefSeq" id="NP_391977.1">
    <property type="nucleotide sequence ID" value="NC_000964.3"/>
</dbReference>
<dbReference type="RefSeq" id="WP_003219244.1">
    <property type="nucleotide sequence ID" value="NZ_OZ025638.1"/>
</dbReference>
<dbReference type="SMR" id="P37522"/>
<dbReference type="FunCoup" id="P37522">
    <property type="interactions" value="370"/>
</dbReference>
<dbReference type="IntAct" id="P37522">
    <property type="interactions" value="2"/>
</dbReference>
<dbReference type="STRING" id="224308.BSU40970"/>
<dbReference type="PaxDb" id="224308-BSU40970"/>
<dbReference type="EnsemblBacteria" id="CAB16134">
    <property type="protein sequence ID" value="CAB16134"/>
    <property type="gene ID" value="BSU_40970"/>
</dbReference>
<dbReference type="GeneID" id="86871260"/>
<dbReference type="GeneID" id="937928"/>
<dbReference type="KEGG" id="bsu:BSU40970"/>
<dbReference type="PATRIC" id="fig|224308.179.peg.4439"/>
<dbReference type="eggNOG" id="COG1192">
    <property type="taxonomic scope" value="Bacteria"/>
</dbReference>
<dbReference type="InParanoid" id="P37522"/>
<dbReference type="OrthoDB" id="9815116at2"/>
<dbReference type="PhylomeDB" id="P37522"/>
<dbReference type="BioCyc" id="BSUB:BSU40970-MONOMER"/>
<dbReference type="PRO" id="PR:P37522"/>
<dbReference type="Proteomes" id="UP000001570">
    <property type="component" value="Chromosome"/>
</dbReference>
<dbReference type="GO" id="GO:0005737">
    <property type="term" value="C:cytoplasm"/>
    <property type="evidence" value="ECO:0007669"/>
    <property type="project" value="UniProtKB-SubCell"/>
</dbReference>
<dbReference type="GO" id="GO:0005524">
    <property type="term" value="F:ATP binding"/>
    <property type="evidence" value="ECO:0007669"/>
    <property type="project" value="UniProtKB-KW"/>
</dbReference>
<dbReference type="GO" id="GO:0016887">
    <property type="term" value="F:ATP hydrolysis activity"/>
    <property type="evidence" value="ECO:0007669"/>
    <property type="project" value="RHEA"/>
</dbReference>
<dbReference type="GO" id="GO:0042174">
    <property type="term" value="P:negative regulation of sporulation resulting in formation of a cellular spore"/>
    <property type="evidence" value="ECO:0000316"/>
    <property type="project" value="CACAO"/>
</dbReference>
<dbReference type="GO" id="GO:0030435">
    <property type="term" value="P:sporulation resulting in formation of a cellular spore"/>
    <property type="evidence" value="ECO:0007669"/>
    <property type="project" value="UniProtKB-KW"/>
</dbReference>
<dbReference type="CDD" id="cd02042">
    <property type="entry name" value="ParAB_family"/>
    <property type="match status" value="1"/>
</dbReference>
<dbReference type="FunFam" id="3.40.50.300:FF:000285">
    <property type="entry name" value="Sporulation initiation inhibitor Soj"/>
    <property type="match status" value="1"/>
</dbReference>
<dbReference type="Gene3D" id="3.40.50.300">
    <property type="entry name" value="P-loop containing nucleotide triphosphate hydrolases"/>
    <property type="match status" value="1"/>
</dbReference>
<dbReference type="InterPro" id="IPR025669">
    <property type="entry name" value="AAA_dom"/>
</dbReference>
<dbReference type="InterPro" id="IPR050678">
    <property type="entry name" value="DNA_Partitioning_ATPase"/>
</dbReference>
<dbReference type="InterPro" id="IPR027417">
    <property type="entry name" value="P-loop_NTPase"/>
</dbReference>
<dbReference type="PANTHER" id="PTHR13696">
    <property type="entry name" value="P-LOOP CONTAINING NUCLEOSIDE TRIPHOSPHATE HYDROLASE"/>
    <property type="match status" value="1"/>
</dbReference>
<dbReference type="PANTHER" id="PTHR13696:SF52">
    <property type="entry name" value="PARA FAMILY PROTEIN CT_582"/>
    <property type="match status" value="1"/>
</dbReference>
<dbReference type="Pfam" id="PF13614">
    <property type="entry name" value="AAA_31"/>
    <property type="match status" value="1"/>
</dbReference>
<dbReference type="PIRSF" id="PIRSF009320">
    <property type="entry name" value="Nuc_binding_HP_1000"/>
    <property type="match status" value="1"/>
</dbReference>
<dbReference type="PRINTS" id="PR00091">
    <property type="entry name" value="NITROGNASEII"/>
</dbReference>
<dbReference type="SUPFAM" id="SSF52540">
    <property type="entry name" value="P-loop containing nucleoside triphosphate hydrolases"/>
    <property type="match status" value="1"/>
</dbReference>
<name>SOJ_BACSU</name>
<feature type="chain" id="PRO_0000201981" description="Sporulation initiation inhibitor protein Soj">
    <location>
        <begin position="1"/>
        <end position="253"/>
    </location>
</feature>
<feature type="binding site" evidence="1">
    <location>
        <position position="11"/>
    </location>
    <ligand>
        <name>ATP</name>
        <dbReference type="ChEBI" id="CHEBI:30616"/>
    </ligand>
</feature>
<feature type="binding site" evidence="1">
    <location>
        <position position="12"/>
    </location>
    <ligand>
        <name>ATP</name>
        <dbReference type="ChEBI" id="CHEBI:30616"/>
    </ligand>
</feature>
<feature type="binding site" evidence="1">
    <location>
        <position position="13"/>
    </location>
    <ligand>
        <name>ATP</name>
        <dbReference type="ChEBI" id="CHEBI:30616"/>
    </ligand>
</feature>
<feature type="binding site" evidence="1">
    <location>
        <position position="14"/>
    </location>
    <ligand>
        <name>ATP</name>
        <dbReference type="ChEBI" id="CHEBI:30616"/>
    </ligand>
</feature>
<feature type="binding site" evidence="1">
    <location>
        <position position="15"/>
    </location>
    <ligand>
        <name>ATP</name>
        <dbReference type="ChEBI" id="CHEBI:30616"/>
    </ligand>
</feature>
<feature type="binding site" evidence="1">
    <location>
        <position position="16"/>
    </location>
    <ligand>
        <name>ATP</name>
        <dbReference type="ChEBI" id="CHEBI:30616"/>
    </ligand>
</feature>
<feature type="binding site" evidence="1">
    <location>
        <position position="17"/>
    </location>
    <ligand>
        <name>ATP</name>
        <dbReference type="ChEBI" id="CHEBI:30616"/>
    </ligand>
</feature>
<feature type="binding site" evidence="1">
    <location>
        <position position="17"/>
    </location>
    <ligand>
        <name>Mg(2+)</name>
        <dbReference type="ChEBI" id="CHEBI:18420"/>
    </ligand>
</feature>
<feature type="binding site" evidence="1">
    <location>
        <position position="18"/>
    </location>
    <ligand>
        <name>ATP</name>
        <dbReference type="ChEBI" id="CHEBI:30616"/>
    </ligand>
</feature>
<feature type="binding site" evidence="1">
    <location>
        <position position="214"/>
    </location>
    <ligand>
        <name>ATP</name>
        <dbReference type="ChEBI" id="CHEBI:30616"/>
    </ligand>
</feature>
<feature type="binding site" evidence="1">
    <location>
        <position position="216"/>
    </location>
    <ligand>
        <name>ATP</name>
        <dbReference type="ChEBI" id="CHEBI:30616"/>
    </ligand>
</feature>
<feature type="mutagenesis site" description="Does not dimerize, decreases replication initiation, wild-type localization which no longer depends on Spo0J, 2.6% anucleate cells, nearly 40% of cells have only 1 oriC region, severely inhibits growth on overexpression, increased interaction with DnaA. Decreases DnaA oligomerization in vivo and in vitro." evidence="2 3">
    <original>G</original>
    <variation>V</variation>
    <location>
        <position position="12"/>
    </location>
</feature>
<feature type="mutagenesis site" description="Does not bind ATP, decreases replication initiation, loss of septal location, increased interaction with DnaA. Decreased DnaA oligomerization." evidence="2 3">
    <original>K</original>
    <variation>A</variation>
    <location>
        <position position="16"/>
    </location>
</feature>
<feature type="mutagenesis site" description="Increases replication initiation, many foci in cell, no septal localization, complete colocalization with Spo0J, nearly 60% of cells have &gt;2 oriC regions, decreased interaction with DnaA, represses sporulation in the absence of spo0J." evidence="2">
    <original>D</original>
    <variation>A</variation>
    <location>
        <position position="40"/>
    </location>
</feature>
<feature type="mutagenesis site" description="Dimerizes but does not bind DNA, no change in DnaA oligomerization in vivo and in vitro, interacts with DnaA." evidence="3">
    <original>R</original>
    <variation>A</variation>
    <location>
        <position position="189"/>
    </location>
</feature>
<protein>
    <recommendedName>
        <fullName>Sporulation initiation inhibitor protein Soj</fullName>
        <ecNumber evidence="1">3.6.4.-</ecNumber>
    </recommendedName>
    <alternativeName>
        <fullName evidence="6">Suppressor of spo0J</fullName>
    </alternativeName>
</protein>
<reference key="1">
    <citation type="journal article" date="1992" name="Mol. Microbiol.">
        <title>Genes and their organization in the replication origin region of the bacterial chromosome.</title>
        <authorList>
            <person name="Ogasawara N."/>
            <person name="Yoshikawa H."/>
        </authorList>
    </citation>
    <scope>NUCLEOTIDE SEQUENCE [GENOMIC DNA]</scope>
    <source>
        <strain>168 / CRK2000</strain>
    </source>
</reference>
<reference key="2">
    <citation type="journal article" date="1994" name="DNA Res.">
        <title>Systematic sequencing of the 180 kilobase region of the Bacillus subtilis chromosome containing the replication origin.</title>
        <authorList>
            <person name="Ogasawara N."/>
            <person name="Nakai S."/>
            <person name="Yoshikawa H."/>
        </authorList>
    </citation>
    <scope>NUCLEOTIDE SEQUENCE [GENOMIC DNA]</scope>
    <source>
        <strain>168</strain>
    </source>
</reference>
<reference key="3">
    <citation type="journal article" date="1997" name="Nature">
        <title>The complete genome sequence of the Gram-positive bacterium Bacillus subtilis.</title>
        <authorList>
            <person name="Kunst F."/>
            <person name="Ogasawara N."/>
            <person name="Moszer I."/>
            <person name="Albertini A.M."/>
            <person name="Alloni G."/>
            <person name="Azevedo V."/>
            <person name="Bertero M.G."/>
            <person name="Bessieres P."/>
            <person name="Bolotin A."/>
            <person name="Borchert S."/>
            <person name="Borriss R."/>
            <person name="Boursier L."/>
            <person name="Brans A."/>
            <person name="Braun M."/>
            <person name="Brignell S.C."/>
            <person name="Bron S."/>
            <person name="Brouillet S."/>
            <person name="Bruschi C.V."/>
            <person name="Caldwell B."/>
            <person name="Capuano V."/>
            <person name="Carter N.M."/>
            <person name="Choi S.-K."/>
            <person name="Codani J.-J."/>
            <person name="Connerton I.F."/>
            <person name="Cummings N.J."/>
            <person name="Daniel R.A."/>
            <person name="Denizot F."/>
            <person name="Devine K.M."/>
            <person name="Duesterhoeft A."/>
            <person name="Ehrlich S.D."/>
            <person name="Emmerson P.T."/>
            <person name="Entian K.-D."/>
            <person name="Errington J."/>
            <person name="Fabret C."/>
            <person name="Ferrari E."/>
            <person name="Foulger D."/>
            <person name="Fritz C."/>
            <person name="Fujita M."/>
            <person name="Fujita Y."/>
            <person name="Fuma S."/>
            <person name="Galizzi A."/>
            <person name="Galleron N."/>
            <person name="Ghim S.-Y."/>
            <person name="Glaser P."/>
            <person name="Goffeau A."/>
            <person name="Golightly E.J."/>
            <person name="Grandi G."/>
            <person name="Guiseppi G."/>
            <person name="Guy B.J."/>
            <person name="Haga K."/>
            <person name="Haiech J."/>
            <person name="Harwood C.R."/>
            <person name="Henaut A."/>
            <person name="Hilbert H."/>
            <person name="Holsappel S."/>
            <person name="Hosono S."/>
            <person name="Hullo M.-F."/>
            <person name="Itaya M."/>
            <person name="Jones L.-M."/>
            <person name="Joris B."/>
            <person name="Karamata D."/>
            <person name="Kasahara Y."/>
            <person name="Klaerr-Blanchard M."/>
            <person name="Klein C."/>
            <person name="Kobayashi Y."/>
            <person name="Koetter P."/>
            <person name="Koningstein G."/>
            <person name="Krogh S."/>
            <person name="Kumano M."/>
            <person name="Kurita K."/>
            <person name="Lapidus A."/>
            <person name="Lardinois S."/>
            <person name="Lauber J."/>
            <person name="Lazarevic V."/>
            <person name="Lee S.-M."/>
            <person name="Levine A."/>
            <person name="Liu H."/>
            <person name="Masuda S."/>
            <person name="Mauel C."/>
            <person name="Medigue C."/>
            <person name="Medina N."/>
            <person name="Mellado R.P."/>
            <person name="Mizuno M."/>
            <person name="Moestl D."/>
            <person name="Nakai S."/>
            <person name="Noback M."/>
            <person name="Noone D."/>
            <person name="O'Reilly M."/>
            <person name="Ogawa K."/>
            <person name="Ogiwara A."/>
            <person name="Oudega B."/>
            <person name="Park S.-H."/>
            <person name="Parro V."/>
            <person name="Pohl T.M."/>
            <person name="Portetelle D."/>
            <person name="Porwollik S."/>
            <person name="Prescott A.M."/>
            <person name="Presecan E."/>
            <person name="Pujic P."/>
            <person name="Purnelle B."/>
            <person name="Rapoport G."/>
            <person name="Rey M."/>
            <person name="Reynolds S."/>
            <person name="Rieger M."/>
            <person name="Rivolta C."/>
            <person name="Rocha E."/>
            <person name="Roche B."/>
            <person name="Rose M."/>
            <person name="Sadaie Y."/>
            <person name="Sato T."/>
            <person name="Scanlan E."/>
            <person name="Schleich S."/>
            <person name="Schroeter R."/>
            <person name="Scoffone F."/>
            <person name="Sekiguchi J."/>
            <person name="Sekowska A."/>
            <person name="Seror S.J."/>
            <person name="Serror P."/>
            <person name="Shin B.-S."/>
            <person name="Soldo B."/>
            <person name="Sorokin A."/>
            <person name="Tacconi E."/>
            <person name="Takagi T."/>
            <person name="Takahashi H."/>
            <person name="Takemaru K."/>
            <person name="Takeuchi M."/>
            <person name="Tamakoshi A."/>
            <person name="Tanaka T."/>
            <person name="Terpstra P."/>
            <person name="Tognoni A."/>
            <person name="Tosato V."/>
            <person name="Uchiyama S."/>
            <person name="Vandenbol M."/>
            <person name="Vannier F."/>
            <person name="Vassarotti A."/>
            <person name="Viari A."/>
            <person name="Wambutt R."/>
            <person name="Wedler E."/>
            <person name="Wedler H."/>
            <person name="Weitzenegger T."/>
            <person name="Winters P."/>
            <person name="Wipat A."/>
            <person name="Yamamoto H."/>
            <person name="Yamane K."/>
            <person name="Yasumoto K."/>
            <person name="Yata K."/>
            <person name="Yoshida K."/>
            <person name="Yoshikawa H.-F."/>
            <person name="Zumstein E."/>
            <person name="Yoshikawa H."/>
            <person name="Danchin A."/>
        </authorList>
    </citation>
    <scope>NUCLEOTIDE SEQUENCE [LARGE SCALE GENOMIC DNA]</scope>
    <source>
        <strain>168</strain>
    </source>
</reference>
<reference key="4">
    <citation type="journal article" date="1994" name="J. Bacteriol.">
        <title>spo0J is required for normal chromosome segregation as well as the initiation of sporulation in Bacillus subtilis.</title>
        <authorList>
            <person name="Ireton K."/>
            <person name="Gunther N.W. IV"/>
            <person name="Grossman A.D."/>
        </authorList>
    </citation>
    <scope>FUNCTION</scope>
    <scope>DISRUPTION PHENOTYPE</scope>
    <source>
        <strain>168 / JH642</strain>
    </source>
</reference>
<reference key="5">
    <citation type="journal article" date="2008" name="Cell">
        <title>Dynamic control of the DNA replication initiation protein DnaA by Soj/ParA.</title>
        <authorList>
            <person name="Murray H."/>
            <person name="Errington J."/>
        </authorList>
    </citation>
    <scope>FUNCTION</scope>
    <scope>INTERACTION WITH DNAA</scope>
    <scope>SUBCELLULAR LOCATION</scope>
    <scope>DISRUPTION PHENOTYPE</scope>
    <scope>MUTAGENESIS OF GLY-12; LYS-16 AND ASP-40</scope>
    <source>
        <strain>168</strain>
    </source>
</reference>
<reference key="6">
    <citation type="journal article" date="2012" name="EMBO J.">
        <title>Soj/ParA stalls DNA replication by inhibiting helix formation of the initiator protein DnaA.</title>
        <authorList>
            <person name="Scholefield G."/>
            <person name="Errington J."/>
            <person name="Murray H."/>
        </authorList>
    </citation>
    <scope>FUNCTION</scope>
    <scope>INTERACTION WITH DNAA</scope>
    <scope>MUTAGENESIS OF GLY-12; LYS-16 AND ARG-189</scope>
    <source>
        <strain>168</strain>
    </source>
</reference>
<reference key="7">
    <citation type="journal article" date="2017" name="PLoS Genet.">
        <title>Rapid turnover of DnaA at replication origin regions contributes to initiation control of DNA replication.</title>
        <authorList>
            <person name="Schenk K."/>
            <person name="Hervas A.B."/>
            <person name="Roesch T.C."/>
            <person name="Eisemann M."/>
            <person name="Schmitt B.A."/>
            <person name="Dahlke S."/>
            <person name="Kleine-Borgmann L."/>
            <person name="Murray S.M."/>
            <person name="Graumann P.L."/>
        </authorList>
    </citation>
    <scope>FUNCTION</scope>
    <scope>SUBCELLULAR LOCATION</scope>
    <scope>DISRUPTION PHENOTYPE</scope>
</reference>
<keyword id="KW-0067">ATP-binding</keyword>
<keyword id="KW-0963">Cytoplasm</keyword>
<keyword id="KW-0236">DNA replication inhibitor</keyword>
<keyword id="KW-0238">DNA-binding</keyword>
<keyword id="KW-0378">Hydrolase</keyword>
<keyword id="KW-0460">Magnesium</keyword>
<keyword id="KW-0479">Metal-binding</keyword>
<keyword id="KW-0547">Nucleotide-binding</keyword>
<keyword id="KW-1185">Reference proteome</keyword>
<keyword id="KW-0749">Sporulation</keyword>
<gene>
    <name evidence="6" type="primary">soj</name>
    <name type="synonym">orf253</name>
    <name evidence="7" type="synonym">parA</name>
    <name type="ordered locus">BSU40970</name>
</gene>
<sequence length="253" mass="27543">MGKIIAITNQKGGVGKTTTSVNLGACLAYIGKRVLLVDIDPQGNATSGLGIEKADVEQCVYDILVDDADVIDIIKATTVENLDVIPATIQLAGAEIELVPTISREVRLKRALEAVKQNYDYIIIDCPPSLGLLTINALTASDSVVIPVQCEYYALEGLSQLLNTVRLVQKHLNTDLMIEGVLLTMLDARTNLGIQVIEEVKKYFRDKVYKTVIPRNVRLSEAPSHGKPIILYDPRSRGAEVYLDLAKEVAANG</sequence>
<comment type="function">
    <text evidence="1 2 3 4 5">Acts as a spatially regulated molecular switch, capable of either inhibiting or activating the ability of DnaA to initiate DNA replication (PubMed:18854156, PubMed:22286949). Monomeric ADP-Soj inhibits oligomerization of DnaA on single-stranded (ss)- or double-stranded (ds)DNA, thus inhibiting DNA replication initiation; does not disassemble premade DnaA-DNA filaments (PubMed:22286949). Decreases the residence time of DnaA on the chromosome at its binding sites (oriC, replication forks and (probably) promoter-binding sites) (PubMed:28166228). Soj forms nucleoprotein filaments in an ATP- and DNA-dependent manner (By similarity). Inhibits the initiation of sporulation, Spo0J antagonizes this inhibition (PubMed:8071208, PubMed:18854156). Soj ultimately inhibits the activation (phosphorylation) of Spo0A (PubMed:8071208).</text>
</comment>
<comment type="catalytic activity">
    <reaction evidence="1">
        <text>ATP + H2O = ADP + phosphate + H(+)</text>
        <dbReference type="Rhea" id="RHEA:13065"/>
        <dbReference type="ChEBI" id="CHEBI:15377"/>
        <dbReference type="ChEBI" id="CHEBI:15378"/>
        <dbReference type="ChEBI" id="CHEBI:30616"/>
        <dbReference type="ChEBI" id="CHEBI:43474"/>
        <dbReference type="ChEBI" id="CHEBI:456216"/>
    </reaction>
</comment>
<comment type="subunit">
    <text evidence="1 2 3">Dimerizes in the presence of ATP but not ADP; ATP-binding is required for double-stranded (ds)DNA-binding (By similarity). Interacts with DnaA (PubMed:18854156, PubMed:22286949).</text>
</comment>
<comment type="interaction">
    <interactant intactId="EBI-2014674">
        <id>P37522</id>
    </interactant>
    <interactant intactId="EBI-2014722">
        <id>P05648</id>
        <label>dnaA</label>
    </interactant>
    <organismsDiffer>false</organismsDiffer>
    <experiments>2</experiments>
</comment>
<comment type="subcellular location">
    <subcellularLocation>
        <location evidence="2">Cytoplasm</location>
    </subcellularLocation>
    <text evidence="2">Most protein localizes to the cell septa, with faint cytoplasmic foci also seen; requires Spo0J for correct localization, in an spo0J deletion only associates with the nucleoid, requires minD for association with the septa and foci formation.</text>
</comment>
<comment type="disruption phenotype">
    <text evidence="2 4 5">Not required for sporulation or for chromosome partioning (PubMed:8071208). Cells initiate DNA replication early, 2-fold decrease in sporulation (PubMed:18854156). In a double soj-spo0J deletion DnaA transiently arrests for longer at its chromosomal binding sites, not just at oriC (PubMed:28166228).</text>
</comment>
<comment type="similarity">
    <text evidence="8">Belongs to the ParA family.</text>
</comment>
<evidence type="ECO:0000250" key="1">
    <source>
        <dbReference type="UniProtKB" id="Q72H90"/>
    </source>
</evidence>
<evidence type="ECO:0000269" key="2">
    <source>
    </source>
</evidence>
<evidence type="ECO:0000269" key="3">
    <source>
    </source>
</evidence>
<evidence type="ECO:0000269" key="4">
    <source>
    </source>
</evidence>
<evidence type="ECO:0000269" key="5">
    <source>
    </source>
</evidence>
<evidence type="ECO:0000303" key="6">
    <source>
    </source>
</evidence>
<evidence type="ECO:0000303" key="7">
    <source>
    </source>
</evidence>
<evidence type="ECO:0000305" key="8"/>